<dbReference type="EC" id="2.1.3.2" evidence="1"/>
<dbReference type="EMBL" id="AE000513">
    <property type="protein sequence ID" value="AAF10682.1"/>
    <property type="molecule type" value="Genomic_DNA"/>
</dbReference>
<dbReference type="PIR" id="D75435">
    <property type="entry name" value="D75435"/>
</dbReference>
<dbReference type="RefSeq" id="NP_294833.1">
    <property type="nucleotide sequence ID" value="NC_001263.1"/>
</dbReference>
<dbReference type="RefSeq" id="WP_010887752.1">
    <property type="nucleotide sequence ID" value="NC_001263.1"/>
</dbReference>
<dbReference type="SMR" id="Q9RVC0"/>
<dbReference type="FunCoup" id="Q9RVC0">
    <property type="interactions" value="444"/>
</dbReference>
<dbReference type="STRING" id="243230.DR_1109"/>
<dbReference type="PaxDb" id="243230-DR_1109"/>
<dbReference type="EnsemblBacteria" id="AAF10682">
    <property type="protein sequence ID" value="AAF10682"/>
    <property type="gene ID" value="DR_1109"/>
</dbReference>
<dbReference type="GeneID" id="69517355"/>
<dbReference type="KEGG" id="dra:DR_1109"/>
<dbReference type="PATRIC" id="fig|243230.17.peg.1305"/>
<dbReference type="eggNOG" id="COG0540">
    <property type="taxonomic scope" value="Bacteria"/>
</dbReference>
<dbReference type="HOGENOM" id="CLU_043846_2_0_0"/>
<dbReference type="InParanoid" id="Q9RVC0"/>
<dbReference type="OrthoDB" id="9802587at2"/>
<dbReference type="UniPathway" id="UPA00070">
    <property type="reaction ID" value="UER00116"/>
</dbReference>
<dbReference type="Proteomes" id="UP000002524">
    <property type="component" value="Chromosome 1"/>
</dbReference>
<dbReference type="GO" id="GO:0016597">
    <property type="term" value="F:amino acid binding"/>
    <property type="evidence" value="ECO:0007669"/>
    <property type="project" value="InterPro"/>
</dbReference>
<dbReference type="GO" id="GO:0004070">
    <property type="term" value="F:aspartate carbamoyltransferase activity"/>
    <property type="evidence" value="ECO:0007669"/>
    <property type="project" value="UniProtKB-UniRule"/>
</dbReference>
<dbReference type="GO" id="GO:0006207">
    <property type="term" value="P:'de novo' pyrimidine nucleobase biosynthetic process"/>
    <property type="evidence" value="ECO:0007669"/>
    <property type="project" value="InterPro"/>
</dbReference>
<dbReference type="GO" id="GO:0044205">
    <property type="term" value="P:'de novo' UMP biosynthetic process"/>
    <property type="evidence" value="ECO:0007669"/>
    <property type="project" value="UniProtKB-UniRule"/>
</dbReference>
<dbReference type="GO" id="GO:0006520">
    <property type="term" value="P:amino acid metabolic process"/>
    <property type="evidence" value="ECO:0007669"/>
    <property type="project" value="InterPro"/>
</dbReference>
<dbReference type="FunFam" id="3.40.50.1370:FF:000007">
    <property type="entry name" value="Aspartate carbamoyltransferase"/>
    <property type="match status" value="1"/>
</dbReference>
<dbReference type="Gene3D" id="3.40.50.1370">
    <property type="entry name" value="Aspartate/ornithine carbamoyltransferase"/>
    <property type="match status" value="2"/>
</dbReference>
<dbReference type="HAMAP" id="MF_00001">
    <property type="entry name" value="Asp_carb_tr"/>
    <property type="match status" value="1"/>
</dbReference>
<dbReference type="InterPro" id="IPR006132">
    <property type="entry name" value="Asp/Orn_carbamoyltranf_P-bd"/>
</dbReference>
<dbReference type="InterPro" id="IPR006130">
    <property type="entry name" value="Asp/Orn_carbamoylTrfase"/>
</dbReference>
<dbReference type="InterPro" id="IPR036901">
    <property type="entry name" value="Asp/Orn_carbamoylTrfase_sf"/>
</dbReference>
<dbReference type="InterPro" id="IPR002082">
    <property type="entry name" value="Asp_carbamoyltransf"/>
</dbReference>
<dbReference type="InterPro" id="IPR006131">
    <property type="entry name" value="Asp_carbamoyltransf_Asp/Orn-bd"/>
</dbReference>
<dbReference type="NCBIfam" id="TIGR00670">
    <property type="entry name" value="asp_carb_tr"/>
    <property type="match status" value="1"/>
</dbReference>
<dbReference type="NCBIfam" id="NF002032">
    <property type="entry name" value="PRK00856.1"/>
    <property type="match status" value="1"/>
</dbReference>
<dbReference type="PANTHER" id="PTHR45753:SF6">
    <property type="entry name" value="ASPARTATE CARBAMOYLTRANSFERASE"/>
    <property type="match status" value="1"/>
</dbReference>
<dbReference type="PANTHER" id="PTHR45753">
    <property type="entry name" value="ORNITHINE CARBAMOYLTRANSFERASE, MITOCHONDRIAL"/>
    <property type="match status" value="1"/>
</dbReference>
<dbReference type="Pfam" id="PF00185">
    <property type="entry name" value="OTCace"/>
    <property type="match status" value="1"/>
</dbReference>
<dbReference type="Pfam" id="PF02729">
    <property type="entry name" value="OTCace_N"/>
    <property type="match status" value="1"/>
</dbReference>
<dbReference type="PRINTS" id="PR00100">
    <property type="entry name" value="AOTCASE"/>
</dbReference>
<dbReference type="PRINTS" id="PR00101">
    <property type="entry name" value="ATCASE"/>
</dbReference>
<dbReference type="SUPFAM" id="SSF53671">
    <property type="entry name" value="Aspartate/ornithine carbamoyltransferase"/>
    <property type="match status" value="1"/>
</dbReference>
<dbReference type="PROSITE" id="PS00097">
    <property type="entry name" value="CARBAMOYLTRANSFERASE"/>
    <property type="match status" value="1"/>
</dbReference>
<gene>
    <name evidence="1" type="primary">pyrB</name>
    <name type="ordered locus">DR_1109</name>
</gene>
<accession>Q9RVC0</accession>
<name>PYRB_DEIRA</name>
<proteinExistence type="inferred from homology"/>
<feature type="chain" id="PRO_0000113125" description="Aspartate carbamoyltransferase catalytic subunit">
    <location>
        <begin position="1"/>
        <end position="314"/>
    </location>
</feature>
<feature type="binding site" evidence="1">
    <location>
        <position position="64"/>
    </location>
    <ligand>
        <name>carbamoyl phosphate</name>
        <dbReference type="ChEBI" id="CHEBI:58228"/>
    </ligand>
</feature>
<feature type="binding site" evidence="1">
    <location>
        <position position="65"/>
    </location>
    <ligand>
        <name>carbamoyl phosphate</name>
        <dbReference type="ChEBI" id="CHEBI:58228"/>
    </ligand>
</feature>
<feature type="binding site" evidence="1">
    <location>
        <position position="92"/>
    </location>
    <ligand>
        <name>L-aspartate</name>
        <dbReference type="ChEBI" id="CHEBI:29991"/>
    </ligand>
</feature>
<feature type="binding site" evidence="1">
    <location>
        <position position="114"/>
    </location>
    <ligand>
        <name>carbamoyl phosphate</name>
        <dbReference type="ChEBI" id="CHEBI:58228"/>
    </ligand>
</feature>
<feature type="binding site" evidence="1">
    <location>
        <position position="142"/>
    </location>
    <ligand>
        <name>carbamoyl phosphate</name>
        <dbReference type="ChEBI" id="CHEBI:58228"/>
    </ligand>
</feature>
<feature type="binding site" evidence="1">
    <location>
        <position position="145"/>
    </location>
    <ligand>
        <name>carbamoyl phosphate</name>
        <dbReference type="ChEBI" id="CHEBI:58228"/>
    </ligand>
</feature>
<feature type="binding site" evidence="1">
    <location>
        <position position="175"/>
    </location>
    <ligand>
        <name>L-aspartate</name>
        <dbReference type="ChEBI" id="CHEBI:29991"/>
    </ligand>
</feature>
<feature type="binding site" evidence="1">
    <location>
        <position position="230"/>
    </location>
    <ligand>
        <name>L-aspartate</name>
        <dbReference type="ChEBI" id="CHEBI:29991"/>
    </ligand>
</feature>
<feature type="binding site" evidence="1">
    <location>
        <position position="271"/>
    </location>
    <ligand>
        <name>carbamoyl phosphate</name>
        <dbReference type="ChEBI" id="CHEBI:58228"/>
    </ligand>
</feature>
<feature type="binding site" evidence="1">
    <location>
        <position position="272"/>
    </location>
    <ligand>
        <name>carbamoyl phosphate</name>
        <dbReference type="ChEBI" id="CHEBI:58228"/>
    </ligand>
</feature>
<reference key="1">
    <citation type="journal article" date="1999" name="Science">
        <title>Genome sequence of the radioresistant bacterium Deinococcus radiodurans R1.</title>
        <authorList>
            <person name="White O."/>
            <person name="Eisen J.A."/>
            <person name="Heidelberg J.F."/>
            <person name="Hickey E.K."/>
            <person name="Peterson J.D."/>
            <person name="Dodson R.J."/>
            <person name="Haft D.H."/>
            <person name="Gwinn M.L."/>
            <person name="Nelson W.C."/>
            <person name="Richardson D.L."/>
            <person name="Moffat K.S."/>
            <person name="Qin H."/>
            <person name="Jiang L."/>
            <person name="Pamphile W."/>
            <person name="Crosby M."/>
            <person name="Shen M."/>
            <person name="Vamathevan J.J."/>
            <person name="Lam P."/>
            <person name="McDonald L.A."/>
            <person name="Utterback T.R."/>
            <person name="Zalewski C."/>
            <person name="Makarova K.S."/>
            <person name="Aravind L."/>
            <person name="Daly M.J."/>
            <person name="Minton K.W."/>
            <person name="Fleischmann R.D."/>
            <person name="Ketchum K.A."/>
            <person name="Nelson K.E."/>
            <person name="Salzberg S.L."/>
            <person name="Smith H.O."/>
            <person name="Venter J.C."/>
            <person name="Fraser C.M."/>
        </authorList>
    </citation>
    <scope>NUCLEOTIDE SEQUENCE [LARGE SCALE GENOMIC DNA]</scope>
    <source>
        <strain>ATCC 13939 / DSM 20539 / JCM 16871 / CCUG 27074 / LMG 4051 / NBRC 15346 / NCIMB 9279 / VKM B-1422 / R1</strain>
    </source>
</reference>
<evidence type="ECO:0000255" key="1">
    <source>
        <dbReference type="HAMAP-Rule" id="MF_00001"/>
    </source>
</evidence>
<protein>
    <recommendedName>
        <fullName evidence="1">Aspartate carbamoyltransferase catalytic subunit</fullName>
        <ecNumber evidence="1">2.1.3.2</ecNumber>
    </recommendedName>
    <alternativeName>
        <fullName evidence="1">Aspartate transcarbamylase</fullName>
        <shortName evidence="1">ATCase</shortName>
    </alternativeName>
</protein>
<comment type="function">
    <text evidence="1">Catalyzes the condensation of carbamoyl phosphate and aspartate to form carbamoyl aspartate and inorganic phosphate, the committed step in the de novo pyrimidine nucleotide biosynthesis pathway.</text>
</comment>
<comment type="catalytic activity">
    <reaction evidence="1">
        <text>carbamoyl phosphate + L-aspartate = N-carbamoyl-L-aspartate + phosphate + H(+)</text>
        <dbReference type="Rhea" id="RHEA:20013"/>
        <dbReference type="ChEBI" id="CHEBI:15378"/>
        <dbReference type="ChEBI" id="CHEBI:29991"/>
        <dbReference type="ChEBI" id="CHEBI:32814"/>
        <dbReference type="ChEBI" id="CHEBI:43474"/>
        <dbReference type="ChEBI" id="CHEBI:58228"/>
        <dbReference type="EC" id="2.1.3.2"/>
    </reaction>
</comment>
<comment type="pathway">
    <text evidence="1">Pyrimidine metabolism; UMP biosynthesis via de novo pathway; (S)-dihydroorotate from bicarbonate: step 2/3.</text>
</comment>
<comment type="subunit">
    <text evidence="1">Heterododecamer (2C3:3R2) of six catalytic PyrB chains organized as two trimers (C3), and six regulatory PyrI chains organized as three dimers (R2).</text>
</comment>
<comment type="similarity">
    <text evidence="1">Belongs to the aspartate/ornithine carbamoyltransferase superfamily. ATCase family.</text>
</comment>
<organism>
    <name type="scientific">Deinococcus radiodurans (strain ATCC 13939 / DSM 20539 / JCM 16871 / CCUG 27074 / LMG 4051 / NBRC 15346 / NCIMB 9279 / VKM B-1422 / R1)</name>
    <dbReference type="NCBI Taxonomy" id="243230"/>
    <lineage>
        <taxon>Bacteria</taxon>
        <taxon>Thermotogati</taxon>
        <taxon>Deinococcota</taxon>
        <taxon>Deinococci</taxon>
        <taxon>Deinococcales</taxon>
        <taxon>Deinococcaceae</taxon>
        <taxon>Deinococcus</taxon>
    </lineage>
</organism>
<sequence>MTAASSAGPRPRHLLDFQDWTPERLEAVLDNADTMLQVLDRPVKKVPALQGLTVCTAFFENSTRTRTSFELAARRMSADVVSFAAGNSSVSKGESLRDTIEVLTAYKVDAYVVRHHAAGAAHLVAKYSGKPVINAGDGRRAHPTQALLDAYTIRQEYGSLEGKKVAIIGDIRHSRVARSNAELLPKLGAEVVLCGPATLLPPDLAGQPGVRLTTDPREAVRGAHAVMALRLQQERMNGGYLASLQEYADTYQVNETLMREAESGAIVLHPGPMNRDLEISTEAADGPRSRIIRQVENGQAVRMSVLYHLLVGRA</sequence>
<keyword id="KW-0665">Pyrimidine biosynthesis</keyword>
<keyword id="KW-1185">Reference proteome</keyword>
<keyword id="KW-0808">Transferase</keyword>